<name>CH60_SULNB</name>
<proteinExistence type="inferred from homology"/>
<dbReference type="EC" id="5.6.1.7" evidence="1"/>
<dbReference type="EMBL" id="AP009179">
    <property type="protein sequence ID" value="BAF72907.1"/>
    <property type="molecule type" value="Genomic_DNA"/>
</dbReference>
<dbReference type="RefSeq" id="WP_012083727.1">
    <property type="nucleotide sequence ID" value="NC_009663.1"/>
</dbReference>
<dbReference type="SMR" id="A6QBP8"/>
<dbReference type="STRING" id="387093.SUN_1964"/>
<dbReference type="KEGG" id="sun:SUN_1964"/>
<dbReference type="eggNOG" id="COG0459">
    <property type="taxonomic scope" value="Bacteria"/>
</dbReference>
<dbReference type="HOGENOM" id="CLU_016503_3_0_7"/>
<dbReference type="OrthoDB" id="9766614at2"/>
<dbReference type="Proteomes" id="UP000006378">
    <property type="component" value="Chromosome"/>
</dbReference>
<dbReference type="GO" id="GO:0005737">
    <property type="term" value="C:cytoplasm"/>
    <property type="evidence" value="ECO:0007669"/>
    <property type="project" value="UniProtKB-SubCell"/>
</dbReference>
<dbReference type="GO" id="GO:0005524">
    <property type="term" value="F:ATP binding"/>
    <property type="evidence" value="ECO:0007669"/>
    <property type="project" value="UniProtKB-UniRule"/>
</dbReference>
<dbReference type="GO" id="GO:0140662">
    <property type="term" value="F:ATP-dependent protein folding chaperone"/>
    <property type="evidence" value="ECO:0007669"/>
    <property type="project" value="InterPro"/>
</dbReference>
<dbReference type="GO" id="GO:0016853">
    <property type="term" value="F:isomerase activity"/>
    <property type="evidence" value="ECO:0007669"/>
    <property type="project" value="UniProtKB-KW"/>
</dbReference>
<dbReference type="GO" id="GO:0051082">
    <property type="term" value="F:unfolded protein binding"/>
    <property type="evidence" value="ECO:0007669"/>
    <property type="project" value="UniProtKB-UniRule"/>
</dbReference>
<dbReference type="GO" id="GO:0042026">
    <property type="term" value="P:protein refolding"/>
    <property type="evidence" value="ECO:0007669"/>
    <property type="project" value="UniProtKB-UniRule"/>
</dbReference>
<dbReference type="CDD" id="cd03344">
    <property type="entry name" value="GroEL"/>
    <property type="match status" value="1"/>
</dbReference>
<dbReference type="FunFam" id="3.50.7.10:FF:000001">
    <property type="entry name" value="60 kDa chaperonin"/>
    <property type="match status" value="1"/>
</dbReference>
<dbReference type="Gene3D" id="3.50.7.10">
    <property type="entry name" value="GroEL"/>
    <property type="match status" value="1"/>
</dbReference>
<dbReference type="Gene3D" id="1.10.560.10">
    <property type="entry name" value="GroEL-like equatorial domain"/>
    <property type="match status" value="1"/>
</dbReference>
<dbReference type="Gene3D" id="3.30.260.10">
    <property type="entry name" value="TCP-1-like chaperonin intermediate domain"/>
    <property type="match status" value="1"/>
</dbReference>
<dbReference type="HAMAP" id="MF_00600">
    <property type="entry name" value="CH60"/>
    <property type="match status" value="1"/>
</dbReference>
<dbReference type="InterPro" id="IPR018370">
    <property type="entry name" value="Chaperonin_Cpn60_CS"/>
</dbReference>
<dbReference type="InterPro" id="IPR001844">
    <property type="entry name" value="Cpn60/GroEL"/>
</dbReference>
<dbReference type="InterPro" id="IPR002423">
    <property type="entry name" value="Cpn60/GroEL/TCP-1"/>
</dbReference>
<dbReference type="InterPro" id="IPR027409">
    <property type="entry name" value="GroEL-like_apical_dom_sf"/>
</dbReference>
<dbReference type="InterPro" id="IPR027413">
    <property type="entry name" value="GROEL-like_equatorial_sf"/>
</dbReference>
<dbReference type="InterPro" id="IPR027410">
    <property type="entry name" value="TCP-1-like_intermed_sf"/>
</dbReference>
<dbReference type="NCBIfam" id="TIGR02348">
    <property type="entry name" value="GroEL"/>
    <property type="match status" value="1"/>
</dbReference>
<dbReference type="NCBIfam" id="NF000592">
    <property type="entry name" value="PRK00013.1"/>
    <property type="match status" value="1"/>
</dbReference>
<dbReference type="NCBIfam" id="NF009487">
    <property type="entry name" value="PRK12849.1"/>
    <property type="match status" value="1"/>
</dbReference>
<dbReference type="NCBIfam" id="NF009488">
    <property type="entry name" value="PRK12850.1"/>
    <property type="match status" value="1"/>
</dbReference>
<dbReference type="NCBIfam" id="NF009489">
    <property type="entry name" value="PRK12851.1"/>
    <property type="match status" value="1"/>
</dbReference>
<dbReference type="PANTHER" id="PTHR45633">
    <property type="entry name" value="60 KDA HEAT SHOCK PROTEIN, MITOCHONDRIAL"/>
    <property type="match status" value="1"/>
</dbReference>
<dbReference type="Pfam" id="PF00118">
    <property type="entry name" value="Cpn60_TCP1"/>
    <property type="match status" value="1"/>
</dbReference>
<dbReference type="PRINTS" id="PR00298">
    <property type="entry name" value="CHAPERONIN60"/>
</dbReference>
<dbReference type="SUPFAM" id="SSF52029">
    <property type="entry name" value="GroEL apical domain-like"/>
    <property type="match status" value="1"/>
</dbReference>
<dbReference type="SUPFAM" id="SSF48592">
    <property type="entry name" value="GroEL equatorial domain-like"/>
    <property type="match status" value="1"/>
</dbReference>
<dbReference type="SUPFAM" id="SSF54849">
    <property type="entry name" value="GroEL-intermediate domain like"/>
    <property type="match status" value="1"/>
</dbReference>
<dbReference type="PROSITE" id="PS00296">
    <property type="entry name" value="CHAPERONINS_CPN60"/>
    <property type="match status" value="1"/>
</dbReference>
<keyword id="KW-0067">ATP-binding</keyword>
<keyword id="KW-0143">Chaperone</keyword>
<keyword id="KW-0963">Cytoplasm</keyword>
<keyword id="KW-0413">Isomerase</keyword>
<keyword id="KW-0547">Nucleotide-binding</keyword>
<protein>
    <recommendedName>
        <fullName evidence="1">Chaperonin GroEL</fullName>
        <ecNumber evidence="1">5.6.1.7</ecNumber>
    </recommendedName>
    <alternativeName>
        <fullName evidence="1">60 kDa chaperonin</fullName>
    </alternativeName>
    <alternativeName>
        <fullName evidence="1">Chaperonin-60</fullName>
        <shortName evidence="1">Cpn60</shortName>
    </alternativeName>
</protein>
<comment type="function">
    <text evidence="1">Together with its co-chaperonin GroES, plays an essential role in assisting protein folding. The GroEL-GroES system forms a nano-cage that allows encapsulation of the non-native substrate proteins and provides a physical environment optimized to promote and accelerate protein folding.</text>
</comment>
<comment type="catalytic activity">
    <reaction evidence="1">
        <text>ATP + H2O + a folded polypeptide = ADP + phosphate + an unfolded polypeptide.</text>
        <dbReference type="EC" id="5.6.1.7"/>
    </reaction>
</comment>
<comment type="subunit">
    <text evidence="1">Forms a cylinder of 14 subunits composed of two heptameric rings stacked back-to-back. Interacts with the co-chaperonin GroES.</text>
</comment>
<comment type="subcellular location">
    <subcellularLocation>
        <location evidence="1">Cytoplasm</location>
    </subcellularLocation>
</comment>
<comment type="similarity">
    <text evidence="1">Belongs to the chaperonin (HSP60) family.</text>
</comment>
<accession>A6QBP8</accession>
<organism>
    <name type="scientific">Sulfurovum sp. (strain NBC37-1)</name>
    <dbReference type="NCBI Taxonomy" id="387093"/>
    <lineage>
        <taxon>Bacteria</taxon>
        <taxon>Pseudomonadati</taxon>
        <taxon>Campylobacterota</taxon>
        <taxon>Epsilonproteobacteria</taxon>
        <taxon>Campylobacterales</taxon>
        <taxon>Sulfurovaceae</taxon>
        <taxon>Sulfurovum</taxon>
    </lineage>
</organism>
<feature type="chain" id="PRO_1000025842" description="Chaperonin GroEL">
    <location>
        <begin position="1"/>
        <end position="542"/>
    </location>
</feature>
<feature type="binding site" evidence="1">
    <location>
        <begin position="29"/>
        <end position="32"/>
    </location>
    <ligand>
        <name>ATP</name>
        <dbReference type="ChEBI" id="CHEBI:30616"/>
    </ligand>
</feature>
<feature type="binding site" evidence="1">
    <location>
        <position position="50"/>
    </location>
    <ligand>
        <name>ATP</name>
        <dbReference type="ChEBI" id="CHEBI:30616"/>
    </ligand>
</feature>
<feature type="binding site" evidence="1">
    <location>
        <begin position="86"/>
        <end position="90"/>
    </location>
    <ligand>
        <name>ATP</name>
        <dbReference type="ChEBI" id="CHEBI:30616"/>
    </ligand>
</feature>
<feature type="binding site" evidence="1">
    <location>
        <position position="414"/>
    </location>
    <ligand>
        <name>ATP</name>
        <dbReference type="ChEBI" id="CHEBI:30616"/>
    </ligand>
</feature>
<feature type="binding site" evidence="1">
    <location>
        <begin position="477"/>
        <end position="479"/>
    </location>
    <ligand>
        <name>ATP</name>
        <dbReference type="ChEBI" id="CHEBI:30616"/>
    </ligand>
</feature>
<feature type="binding site" evidence="1">
    <location>
        <position position="493"/>
    </location>
    <ligand>
        <name>ATP</name>
        <dbReference type="ChEBI" id="CHEBI:30616"/>
    </ligand>
</feature>
<evidence type="ECO:0000255" key="1">
    <source>
        <dbReference type="HAMAP-Rule" id="MF_00600"/>
    </source>
</evidence>
<gene>
    <name evidence="1" type="primary">groEL</name>
    <name evidence="1" type="synonym">groL</name>
    <name type="ordered locus">SUN_1964</name>
</gene>
<reference key="1">
    <citation type="journal article" date="2007" name="Proc. Natl. Acad. Sci. U.S.A.">
        <title>Deep-sea vent epsilon-proteobacterial genomes provide insights into emergence of pathogens.</title>
        <authorList>
            <person name="Nakagawa S."/>
            <person name="Takaki Y."/>
            <person name="Shimamura S."/>
            <person name="Reysenbach A.-L."/>
            <person name="Takai K."/>
            <person name="Horikoshi K."/>
        </authorList>
    </citation>
    <scope>NUCLEOTIDE SEQUENCE [LARGE SCALE GENOMIC DNA]</scope>
    <source>
        <strain>NBC37-1</strain>
    </source>
</reference>
<sequence length="542" mass="57382">MAKEIFFSDKARNGLFEGVTKLADAVKVTMGPRGRNVLIQKSFGAPHITKDGVSVAREIELEDTLENMGAQLVKEVASNTADEAGDGTTTATVLAHSIFKEGLRNITAGANPIEVKRGMDKASAAIIEELKKISKEVKDKKEIAQVATISANSDETIGNLIAEAMDRVGKDGVITVEEAKGINDDLEVVEGMQFDRGYLSPYFVTNTEKMTCEMENPLILITDSKITSLKDLIPVLEQIQQSGRPLLIISDDLEGEALATLVLNRLKGVLNIAAVKAPGFGDRKKEMLKDIAILTGANVITEELGLSLDKATLDDLGQAGRVVIDKDNTVIVDGKGDSAAVDARVAEIKIQVENTTSEYDKEKLQERLAKLSGGVAVIKVGAATETEMKEKKDRVDDALSATKAAVDEGIVIGGGAALAKASKAVKLDLEHDEAVGAEIILRAVYAPMKQIAQNAGFDAGVVADKIANNSEANLGFNAATGEYVNMLEAGIIDPLKVARVALQNATSVASLLLTTEATVSDIKEAPTPAPTMPDMGGMPGMM</sequence>